<name>SSRP_STRT1</name>
<organism>
    <name type="scientific">Streptococcus thermophilus (strain CNRZ 1066)</name>
    <dbReference type="NCBI Taxonomy" id="299768"/>
    <lineage>
        <taxon>Bacteria</taxon>
        <taxon>Bacillati</taxon>
        <taxon>Bacillota</taxon>
        <taxon>Bacilli</taxon>
        <taxon>Lactobacillales</taxon>
        <taxon>Streptococcaceae</taxon>
        <taxon>Streptococcus</taxon>
    </lineage>
</organism>
<evidence type="ECO:0000255" key="1">
    <source>
        <dbReference type="HAMAP-Rule" id="MF_00023"/>
    </source>
</evidence>
<feature type="chain" id="PRO_0000103047" description="SsrA-binding protein">
    <location>
        <begin position="1"/>
        <end position="154"/>
    </location>
</feature>
<proteinExistence type="inferred from homology"/>
<protein>
    <recommendedName>
        <fullName evidence="1">SsrA-binding protein</fullName>
    </recommendedName>
    <alternativeName>
        <fullName evidence="1">Small protein B</fullName>
    </alternativeName>
</protein>
<keyword id="KW-0963">Cytoplasm</keyword>
<keyword id="KW-0694">RNA-binding</keyword>
<dbReference type="EMBL" id="CP000024">
    <property type="protein sequence ID" value="AAV62222.1"/>
    <property type="molecule type" value="Genomic_DNA"/>
</dbReference>
<dbReference type="RefSeq" id="WP_002950240.1">
    <property type="nucleotide sequence ID" value="NC_006449.1"/>
</dbReference>
<dbReference type="SMR" id="Q5M0N4"/>
<dbReference type="GeneID" id="66898533"/>
<dbReference type="KEGG" id="stc:str0626"/>
<dbReference type="HOGENOM" id="CLU_108953_0_0_9"/>
<dbReference type="GO" id="GO:0005829">
    <property type="term" value="C:cytosol"/>
    <property type="evidence" value="ECO:0007669"/>
    <property type="project" value="TreeGrafter"/>
</dbReference>
<dbReference type="GO" id="GO:0003723">
    <property type="term" value="F:RNA binding"/>
    <property type="evidence" value="ECO:0007669"/>
    <property type="project" value="UniProtKB-UniRule"/>
</dbReference>
<dbReference type="GO" id="GO:0070929">
    <property type="term" value="P:trans-translation"/>
    <property type="evidence" value="ECO:0007669"/>
    <property type="project" value="UniProtKB-UniRule"/>
</dbReference>
<dbReference type="CDD" id="cd09294">
    <property type="entry name" value="SmpB"/>
    <property type="match status" value="1"/>
</dbReference>
<dbReference type="Gene3D" id="2.40.280.10">
    <property type="match status" value="1"/>
</dbReference>
<dbReference type="HAMAP" id="MF_00023">
    <property type="entry name" value="SmpB"/>
    <property type="match status" value="1"/>
</dbReference>
<dbReference type="InterPro" id="IPR023620">
    <property type="entry name" value="SmpB"/>
</dbReference>
<dbReference type="InterPro" id="IPR000037">
    <property type="entry name" value="SsrA-bd_prot"/>
</dbReference>
<dbReference type="InterPro" id="IPR020081">
    <property type="entry name" value="SsrA-bd_prot_CS"/>
</dbReference>
<dbReference type="NCBIfam" id="NF003843">
    <property type="entry name" value="PRK05422.1"/>
    <property type="match status" value="1"/>
</dbReference>
<dbReference type="NCBIfam" id="TIGR00086">
    <property type="entry name" value="smpB"/>
    <property type="match status" value="1"/>
</dbReference>
<dbReference type="PANTHER" id="PTHR30308:SF2">
    <property type="entry name" value="SSRA-BINDING PROTEIN"/>
    <property type="match status" value="1"/>
</dbReference>
<dbReference type="PANTHER" id="PTHR30308">
    <property type="entry name" value="TMRNA-BINDING COMPONENT OF TRANS-TRANSLATION TAGGING COMPLEX"/>
    <property type="match status" value="1"/>
</dbReference>
<dbReference type="Pfam" id="PF01668">
    <property type="entry name" value="SmpB"/>
    <property type="match status" value="1"/>
</dbReference>
<dbReference type="SUPFAM" id="SSF74982">
    <property type="entry name" value="Small protein B (SmpB)"/>
    <property type="match status" value="1"/>
</dbReference>
<dbReference type="PROSITE" id="PS01317">
    <property type="entry name" value="SSRP"/>
    <property type="match status" value="1"/>
</dbReference>
<comment type="function">
    <text evidence="1">Required for rescue of stalled ribosomes mediated by trans-translation. Binds to transfer-messenger RNA (tmRNA), required for stable association of tmRNA with ribosomes. tmRNA and SmpB together mimic tRNA shape, replacing the anticodon stem-loop with SmpB. tmRNA is encoded by the ssrA gene; the 2 termini fold to resemble tRNA(Ala) and it encodes a 'tag peptide', a short internal open reading frame. During trans-translation Ala-aminoacylated tmRNA acts like a tRNA, entering the A-site of stalled ribosomes, displacing the stalled mRNA. The ribosome then switches to translate the ORF on the tmRNA; the nascent peptide is terminated with the 'tag peptide' encoded by the tmRNA and targeted for degradation. The ribosome is freed to recommence translation, which seems to be the essential function of trans-translation.</text>
</comment>
<comment type="subcellular location">
    <subcellularLocation>
        <location evidence="1">Cytoplasm</location>
    </subcellularLocation>
    <text evidence="1">The tmRNA-SmpB complex associates with stalled 70S ribosomes.</text>
</comment>
<comment type="similarity">
    <text evidence="1">Belongs to the SmpB family.</text>
</comment>
<reference key="1">
    <citation type="journal article" date="2004" name="Nat. Biotechnol.">
        <title>Complete sequence and comparative genome analysis of the dairy bacterium Streptococcus thermophilus.</title>
        <authorList>
            <person name="Bolotin A."/>
            <person name="Quinquis B."/>
            <person name="Renault P."/>
            <person name="Sorokin A."/>
            <person name="Ehrlich S.D."/>
            <person name="Kulakauskas S."/>
            <person name="Lapidus A."/>
            <person name="Goltsman E."/>
            <person name="Mazur M."/>
            <person name="Pusch G.D."/>
            <person name="Fonstein M."/>
            <person name="Overbeek R."/>
            <person name="Kyprides N."/>
            <person name="Purnelle B."/>
            <person name="Prozzi D."/>
            <person name="Ngui K."/>
            <person name="Masuy D."/>
            <person name="Hancy F."/>
            <person name="Burteau S."/>
            <person name="Boutry M."/>
            <person name="Delcour J."/>
            <person name="Goffeau A."/>
            <person name="Hols P."/>
        </authorList>
    </citation>
    <scope>NUCLEOTIDE SEQUENCE [LARGE SCALE GENOMIC DNA]</scope>
    <source>
        <strain>CNRZ 1066</strain>
    </source>
</reference>
<accession>Q5M0N4</accession>
<sequence>MPKGEGNVVAQNKKARHDYSIVDTIEAGIVLTGTEIKSVRAARIQLKDGYAQIKNGEAWLINVHIAPFEQGNIWNQDPERTRKLLLKKKQITKLQNDLKGTGMTLVPLKVYLKNGFAKVLLGIAKGKHDYDKRESIKRREQERDIKRIIKSVNR</sequence>
<gene>
    <name evidence="1" type="primary">smpB</name>
    <name type="ordered locus">str0626</name>
</gene>